<dbReference type="EC" id="4.2.3.-" evidence="3"/>
<dbReference type="EMBL" id="WNKQ01000023">
    <property type="protein sequence ID" value="KAF5844422.1"/>
    <property type="molecule type" value="Genomic_DNA"/>
</dbReference>
<dbReference type="SMR" id="A0A8H5Z7W4"/>
<dbReference type="OMA" id="IKGTMEF"/>
<dbReference type="Proteomes" id="UP000624244">
    <property type="component" value="Unassembled WGS sequence"/>
</dbReference>
<dbReference type="GO" id="GO:0016838">
    <property type="term" value="F:carbon-oxygen lyase activity, acting on phosphates"/>
    <property type="evidence" value="ECO:0007669"/>
    <property type="project" value="InterPro"/>
</dbReference>
<dbReference type="GO" id="GO:0046872">
    <property type="term" value="F:metal ion binding"/>
    <property type="evidence" value="ECO:0007669"/>
    <property type="project" value="UniProtKB-KW"/>
</dbReference>
<dbReference type="Gene3D" id="1.10.600.10">
    <property type="entry name" value="Farnesyl Diphosphate Synthase"/>
    <property type="match status" value="1"/>
</dbReference>
<dbReference type="InterPro" id="IPR008949">
    <property type="entry name" value="Isoprenoid_synthase_dom_sf"/>
</dbReference>
<dbReference type="InterPro" id="IPR024652">
    <property type="entry name" value="Trichodiene_synth"/>
</dbReference>
<dbReference type="Pfam" id="PF06330">
    <property type="entry name" value="TRI5"/>
    <property type="match status" value="1"/>
</dbReference>
<dbReference type="SFLD" id="SFLDS00005">
    <property type="entry name" value="Isoprenoid_Synthase_Type_I"/>
    <property type="match status" value="1"/>
</dbReference>
<dbReference type="SFLD" id="SFLDG01021">
    <property type="entry name" value="Trichodiene_Synthase_Like"/>
    <property type="match status" value="1"/>
</dbReference>
<dbReference type="SUPFAM" id="SSF48576">
    <property type="entry name" value="Terpenoid synthases"/>
    <property type="match status" value="1"/>
</dbReference>
<sequence length="325" mass="37226">MGHSAKDEAPVVALPKLGSIFTKLLRDLKYRTPQHKDTRPALEAAMLEYAVRSGAPYESEYAQRYFDVGLTLACAYYPTHSFAVKLHIAIYSWLAIYIDDDDDGNEDLIGFQERFQKGEPQPSALLQRFAENLQEMSIHFEPLVANFIVLSSLQFVAATLLERRSELHSLQHCKEAKRWPDYVRDRSGVPEAFAYFIFPRDECPDIGAYMQGIPDMMTYINYANDILSFHKETLAGETDNYINTRAVCEQREPFAMLEIVIAETIAANSRVVGLLDTRSDPVYARKWNEFFNGYIFFHVTARRYKLHVYTGLADVGTKWQEVFAG</sequence>
<accession>A0A8H5Z7W4</accession>
<reference key="1">
    <citation type="submission" date="2019-11" db="EMBL/GenBank/DDBJ databases">
        <title>Bipolaris sorokiniana Genome sequencing.</title>
        <authorList>
            <person name="Wang H."/>
        </authorList>
    </citation>
    <scope>NUCLEOTIDE SEQUENCE [LARGE SCALE GENOMIC DNA]</scope>
    <source>
        <strain>(Sacc.) Shoemaker</strain>
    </source>
</reference>
<reference key="2">
    <citation type="journal article" date="2024" name="J. Nat. Prod.">
        <title>Divergent Biosynthesis of Bridged Polycyclic Sesquiterpenoids by a Minimal Fungal Biosynthetic Gene Cluster.</title>
        <authorList>
            <person name="Zhang M.M."/>
            <person name="Long Y."/>
            <person name="Li Y."/>
            <person name="Cui J.J."/>
            <person name="Lv T."/>
            <person name="Luo S."/>
            <person name="Gao K."/>
            <person name="Dong S.H."/>
        </authorList>
    </citation>
    <scope>FUNCTION</scope>
    <scope>CATALYTIC ACTIVITY</scope>
    <scope>PATHWAY</scope>
</reference>
<feature type="chain" id="PRO_0000461290" description="Terpene synthase BipA">
    <location>
        <begin position="1"/>
        <end position="325"/>
    </location>
</feature>
<feature type="short sequence motif" description="DDXXXXD motif" evidence="1">
    <location>
        <begin position="99"/>
        <end position="104"/>
    </location>
</feature>
<feature type="short sequence motif" description="NSE/DTE motif" evidence="1">
    <location>
        <begin position="224"/>
        <end position="232"/>
    </location>
</feature>
<feature type="binding site" evidence="2">
    <location>
        <position position="99"/>
    </location>
    <ligand>
        <name>Mg(2+)</name>
        <dbReference type="ChEBI" id="CHEBI:18420"/>
        <label>1</label>
    </ligand>
</feature>
<feature type="binding site" evidence="2">
    <location>
        <position position="162"/>
    </location>
    <ligand>
        <name>Mg(2+)</name>
        <dbReference type="ChEBI" id="CHEBI:18420"/>
        <label>1</label>
    </ligand>
</feature>
<feature type="binding site" evidence="2">
    <location>
        <position position="224"/>
    </location>
    <ligand>
        <name>Mg(2+)</name>
        <dbReference type="ChEBI" id="CHEBI:18420"/>
        <label>2</label>
    </ligand>
</feature>
<feature type="binding site" evidence="2">
    <location>
        <position position="228"/>
    </location>
    <ligand>
        <name>Mg(2+)</name>
        <dbReference type="ChEBI" id="CHEBI:18420"/>
        <label>2</label>
    </ligand>
</feature>
<feature type="binding site" evidence="2">
    <location>
        <position position="232"/>
    </location>
    <ligand>
        <name>Mg(2+)</name>
        <dbReference type="ChEBI" id="CHEBI:18420"/>
        <label>2</label>
    </ligand>
</feature>
<gene>
    <name evidence="4" type="primary">BipA</name>
    <name type="ORF">GGP41_001448</name>
</gene>
<evidence type="ECO:0000250" key="1">
    <source>
        <dbReference type="UniProtKB" id="A0A348B794"/>
    </source>
</evidence>
<evidence type="ECO:0000250" key="2">
    <source>
        <dbReference type="UniProtKB" id="P13513"/>
    </source>
</evidence>
<evidence type="ECO:0000269" key="3">
    <source>
    </source>
</evidence>
<evidence type="ECO:0000303" key="4">
    <source>
    </source>
</evidence>
<evidence type="ECO:0000305" key="5"/>
<comment type="function">
    <text evidence="3">Sesquiterpene cyclase; part of the minimal biosynthetic bip cluster that mediates the biosynthesis of bridged polycyclic sesquiterpenoids derived from sativene, isosativene, and longifolene (PubMed:38417166). The sesquiterpene cyclase BipA acts as a versatile cyclase that converts farnesyl diphosphate (FPP) into (-)-sativene as the dominant product and (-)-isosativene and (-)-longifolene as minor ones (PubMed:38417166). The cytochrome P450 monooxygenase BipB then hydroxylates different enantiomeric sesquiterpenes, such as (-)-longifolene and (+)-longifolene, at C-15 and C-14 (PubMed:38417166). The C-15- or both C-15- and C-14-hydroxylated products are further oxidized by unclustered oxidases, resulting in a structurally diverse array of sesquiterpenoids (PubMed:38417166). The BipB-catalyzed hydroxylation at C-15 serves as an initiator for the oxidation by the unclustered oxidases (PubMed:38417166).</text>
</comment>
<comment type="cofactor">
    <cofactor evidence="2">
        <name>Mg(2+)</name>
        <dbReference type="ChEBI" id="CHEBI:18420"/>
    </cofactor>
</comment>
<comment type="pathway">
    <text evidence="3">Sesquiterpene biosynthesis.</text>
</comment>
<comment type="domain">
    <text evidence="5">The conserved DDXXD and NSE/DTE motifs are important for the catalytic activity, presumably through binding to Mg(2+).</text>
</comment>
<comment type="similarity">
    <text evidence="5">Belongs to the trichodiene synthase family.</text>
</comment>
<name>BIPA_COCSA</name>
<proteinExistence type="evidence at protein level"/>
<organism>
    <name type="scientific">Cochliobolus sativus</name>
    <name type="common">Common root rot and spot blotch fungus</name>
    <name type="synonym">Bipolaris sorokiniana</name>
    <dbReference type="NCBI Taxonomy" id="45130"/>
    <lineage>
        <taxon>Eukaryota</taxon>
        <taxon>Fungi</taxon>
        <taxon>Dikarya</taxon>
        <taxon>Ascomycota</taxon>
        <taxon>Pezizomycotina</taxon>
        <taxon>Dothideomycetes</taxon>
        <taxon>Pleosporomycetidae</taxon>
        <taxon>Pleosporales</taxon>
        <taxon>Pleosporineae</taxon>
        <taxon>Pleosporaceae</taxon>
        <taxon>Bipolaris</taxon>
    </lineage>
</organism>
<keyword id="KW-0456">Lyase</keyword>
<keyword id="KW-0460">Magnesium</keyword>
<keyword id="KW-0479">Metal-binding</keyword>
<keyword id="KW-1185">Reference proteome</keyword>
<protein>
    <recommendedName>
        <fullName evidence="4">Terpene synthase BipA</fullName>
        <ecNumber evidence="3">4.2.3.-</ecNumber>
    </recommendedName>
    <alternativeName>
        <fullName evidence="4">Minimal biosynthetic bip cluster protein A</fullName>
    </alternativeName>
    <alternativeName>
        <fullName evidence="4">Sesquiterpene cyclase BipA</fullName>
    </alternativeName>
</protein>